<comment type="function">
    <text evidence="1">Involved in pre-mRNA splicing. Facilitates the cooperative formation of U2/U6 helix II in association with stem II in the spliceosome. Binds to RNA (By similarity).</text>
</comment>
<comment type="subunit">
    <text evidence="1">Associated with the spliceosome.</text>
</comment>
<comment type="subcellular location">
    <subcellularLocation>
        <location evidence="1">Nucleus</location>
    </subcellularLocation>
</comment>
<comment type="similarity">
    <text evidence="2">Belongs to the SLT11 family.</text>
</comment>
<proteinExistence type="inferred from homology"/>
<accession>Q5A5N5</accession>
<accession>A0A1D8PIS8</accession>
<feature type="chain" id="PRO_0000212423" description="Pre-mRNA-splicing factor SLT11">
    <location>
        <begin position="1"/>
        <end position="303"/>
    </location>
</feature>
<name>SLT11_CANAL</name>
<dbReference type="EMBL" id="CP017624">
    <property type="protein sequence ID" value="AOW28048.1"/>
    <property type="molecule type" value="Genomic_DNA"/>
</dbReference>
<dbReference type="RefSeq" id="XP_717166.1">
    <property type="nucleotide sequence ID" value="XM_712073.1"/>
</dbReference>
<dbReference type="SMR" id="Q5A5N5"/>
<dbReference type="FunCoup" id="Q5A5N5">
    <property type="interactions" value="155"/>
</dbReference>
<dbReference type="STRING" id="237561.Q5A5N5"/>
<dbReference type="EnsemblFungi" id="C2_10810W_A-T">
    <property type="protein sequence ID" value="C2_10810W_A-T-p1"/>
    <property type="gene ID" value="C2_10810W_A"/>
</dbReference>
<dbReference type="GeneID" id="3641243"/>
<dbReference type="KEGG" id="cal:CAALFM_C210810WA"/>
<dbReference type="CGD" id="CAL0000189228">
    <property type="gene designation" value="orf19.12824"/>
</dbReference>
<dbReference type="VEuPathDB" id="FungiDB:C2_10810W_A"/>
<dbReference type="eggNOG" id="KOG0153">
    <property type="taxonomic scope" value="Eukaryota"/>
</dbReference>
<dbReference type="HOGENOM" id="CLU_027112_1_1_1"/>
<dbReference type="InParanoid" id="Q5A5N5"/>
<dbReference type="OMA" id="RNVCQCC"/>
<dbReference type="OrthoDB" id="10259600at2759"/>
<dbReference type="PRO" id="PR:Q5A5N5"/>
<dbReference type="Proteomes" id="UP000000559">
    <property type="component" value="Chromosome 2"/>
</dbReference>
<dbReference type="GO" id="GO:0000974">
    <property type="term" value="C:Prp19 complex"/>
    <property type="evidence" value="ECO:0000318"/>
    <property type="project" value="GO_Central"/>
</dbReference>
<dbReference type="GO" id="GO:0071006">
    <property type="term" value="C:U2-type catalytic step 1 spliceosome"/>
    <property type="evidence" value="ECO:0000318"/>
    <property type="project" value="GO_Central"/>
</dbReference>
<dbReference type="GO" id="GO:0071007">
    <property type="term" value="C:U2-type catalytic step 2 spliceosome"/>
    <property type="evidence" value="ECO:0000318"/>
    <property type="project" value="GO_Central"/>
</dbReference>
<dbReference type="GO" id="GO:0036002">
    <property type="term" value="F:pre-mRNA binding"/>
    <property type="evidence" value="ECO:0000318"/>
    <property type="project" value="GO_Central"/>
</dbReference>
<dbReference type="GO" id="GO:0017070">
    <property type="term" value="F:U6 snRNA binding"/>
    <property type="evidence" value="ECO:0000318"/>
    <property type="project" value="GO_Central"/>
</dbReference>
<dbReference type="GO" id="GO:0006397">
    <property type="term" value="P:mRNA processing"/>
    <property type="evidence" value="ECO:0007669"/>
    <property type="project" value="UniProtKB-KW"/>
</dbReference>
<dbReference type="GO" id="GO:0008380">
    <property type="term" value="P:RNA splicing"/>
    <property type="evidence" value="ECO:0007669"/>
    <property type="project" value="UniProtKB-KW"/>
</dbReference>
<dbReference type="CDD" id="cd12265">
    <property type="entry name" value="RRM_SLT11"/>
    <property type="match status" value="1"/>
</dbReference>
<dbReference type="Gene3D" id="3.30.70.330">
    <property type="match status" value="1"/>
</dbReference>
<dbReference type="InterPro" id="IPR039171">
    <property type="entry name" value="Cwc2/Slt11"/>
</dbReference>
<dbReference type="InterPro" id="IPR012677">
    <property type="entry name" value="Nucleotide-bd_a/b_plait_sf"/>
</dbReference>
<dbReference type="InterPro" id="IPR035979">
    <property type="entry name" value="RBD_domain_sf"/>
</dbReference>
<dbReference type="InterPro" id="IPR034356">
    <property type="entry name" value="Slt11_RRM"/>
</dbReference>
<dbReference type="InterPro" id="IPR048995">
    <property type="entry name" value="STL11/RBM22-like_N"/>
</dbReference>
<dbReference type="PANTHER" id="PTHR14089">
    <property type="entry name" value="PRE-MRNA-SPLICING FACTOR RBM22"/>
    <property type="match status" value="1"/>
</dbReference>
<dbReference type="PANTHER" id="PTHR14089:SF6">
    <property type="entry name" value="PRE-MRNA-SPLICING FACTOR RBM22"/>
    <property type="match status" value="1"/>
</dbReference>
<dbReference type="Pfam" id="PF21369">
    <property type="entry name" value="STL11_N"/>
    <property type="match status" value="1"/>
</dbReference>
<dbReference type="SUPFAM" id="SSF54928">
    <property type="entry name" value="RNA-binding domain, RBD"/>
    <property type="match status" value="1"/>
</dbReference>
<gene>
    <name type="primary">SLT11</name>
    <name type="synonym">ECM2</name>
    <name type="ordered locus">CAALFM_C210810WA</name>
    <name type="ORF">CaO19.12824</name>
    <name type="ORF">CaO19.5364</name>
</gene>
<protein>
    <recommendedName>
        <fullName>Pre-mRNA-splicing factor SLT11</fullName>
    </recommendedName>
</protein>
<organism>
    <name type="scientific">Candida albicans (strain SC5314 / ATCC MYA-2876)</name>
    <name type="common">Yeast</name>
    <dbReference type="NCBI Taxonomy" id="237561"/>
    <lineage>
        <taxon>Eukaryota</taxon>
        <taxon>Fungi</taxon>
        <taxon>Dikarya</taxon>
        <taxon>Ascomycota</taxon>
        <taxon>Saccharomycotina</taxon>
        <taxon>Pichiomycetes</taxon>
        <taxon>Debaryomycetaceae</taxon>
        <taxon>Candida/Lodderomyces clade</taxon>
        <taxon>Candida</taxon>
    </lineage>
</organism>
<reference key="1">
    <citation type="journal article" date="2004" name="Proc. Natl. Acad. Sci. U.S.A.">
        <title>The diploid genome sequence of Candida albicans.</title>
        <authorList>
            <person name="Jones T."/>
            <person name="Federspiel N.A."/>
            <person name="Chibana H."/>
            <person name="Dungan J."/>
            <person name="Kalman S."/>
            <person name="Magee B.B."/>
            <person name="Newport G."/>
            <person name="Thorstenson Y.R."/>
            <person name="Agabian N."/>
            <person name="Magee P.T."/>
            <person name="Davis R.W."/>
            <person name="Scherer S."/>
        </authorList>
    </citation>
    <scope>NUCLEOTIDE SEQUENCE [LARGE SCALE GENOMIC DNA]</scope>
    <source>
        <strain>SC5314 / ATCC MYA-2876</strain>
    </source>
</reference>
<reference key="2">
    <citation type="journal article" date="2007" name="Genome Biol.">
        <title>Assembly of the Candida albicans genome into sixteen supercontigs aligned on the eight chromosomes.</title>
        <authorList>
            <person name="van het Hoog M."/>
            <person name="Rast T.J."/>
            <person name="Martchenko M."/>
            <person name="Grindle S."/>
            <person name="Dignard D."/>
            <person name="Hogues H."/>
            <person name="Cuomo C."/>
            <person name="Berriman M."/>
            <person name="Scherer S."/>
            <person name="Magee B.B."/>
            <person name="Whiteway M."/>
            <person name="Chibana H."/>
            <person name="Nantel A."/>
            <person name="Magee P.T."/>
        </authorList>
    </citation>
    <scope>GENOME REANNOTATION</scope>
    <source>
        <strain>SC5314 / ATCC MYA-2876</strain>
    </source>
</reference>
<reference key="3">
    <citation type="journal article" date="2013" name="Genome Biol.">
        <title>Assembly of a phased diploid Candida albicans genome facilitates allele-specific measurements and provides a simple model for repeat and indel structure.</title>
        <authorList>
            <person name="Muzzey D."/>
            <person name="Schwartz K."/>
            <person name="Weissman J.S."/>
            <person name="Sherlock G."/>
        </authorList>
    </citation>
    <scope>NUCLEOTIDE SEQUENCE [LARGE SCALE GENOMIC DNA]</scope>
    <scope>GENOME REANNOTATION</scope>
    <source>
        <strain>SC5314 / ATCC MYA-2876</strain>
    </source>
</reference>
<evidence type="ECO:0000250" key="1"/>
<evidence type="ECO:0000305" key="2"/>
<sequence>MSTDIFSICAKCLGDESRIKMIKQVNGDECRQCTRPYTIYRWGNRKQGNKTIICITCARARHCCQSCLLDITYGIPTDLRDTALEMAGLEPLTKSANPTNREVKAIMADKLETKFKEQQERSNDILSKLAEKLNKPEEKKTEVAIDVAKLAKKLPFGNSLDVQKYPDMTTFFVFGFSSDFPQAIFSRYAEQYGKVESVVFSSVSGCGFIRFEKVSSAVGFAKSIAENGLNKNKSIAGLLILENTPMRVCFGKQKPLPRTAADQRKLNTVVTKVMKQLASKSKVGVVVKTKPNVYKALSEDYEE</sequence>
<keyword id="KW-0507">mRNA processing</keyword>
<keyword id="KW-0508">mRNA splicing</keyword>
<keyword id="KW-0539">Nucleus</keyword>
<keyword id="KW-1185">Reference proteome</keyword>
<keyword id="KW-0694">RNA-binding</keyword>
<keyword id="KW-0747">Spliceosome</keyword>